<protein>
    <recommendedName>
        <fullName evidence="3">Lantipeptide Flvbeta.d</fullName>
    </recommendedName>
</protein>
<proteinExistence type="inferred from homology"/>
<keyword id="KW-0964">Secreted</keyword>
<keyword id="KW-0883">Thioether bond</keyword>
<sequence length="64" mass="6861">MDNNTEKFNELAAIADESELNEMLDENITGAGSTIQCVNTTIGTILSVVFDCCPTSACTPPCRF</sequence>
<feature type="propeptide" id="PRO_0000450402" description="Cleaved by FlvT" evidence="5">
    <location>
        <begin position="1"/>
        <end position="31"/>
    </location>
</feature>
<feature type="peptide" id="PRO_0000450403" description="Lantipeptide Flvbeta.d" evidence="5">
    <location>
        <begin position="32"/>
        <end position="64"/>
    </location>
</feature>
<feature type="modified residue" description="2,3-didehydrobutyrine; by FlvM2" evidence="5">
    <location>
        <position position="34"/>
    </location>
</feature>
<feature type="modified residue" description="2,3-didehydrobutyrine; by FlvM2" evidence="5">
    <location>
        <position position="41"/>
    </location>
</feature>
<feature type="cross-link" description="Lanthionine (Ser-Cys); by FlvM2" evidence="5">
    <location>
        <begin position="33"/>
        <end position="37"/>
    </location>
</feature>
<feature type="cross-link" description="Beta-methyllanthionine (Thr-Cys); by FlvM2" evidence="5">
    <location>
        <begin position="44"/>
        <end position="52"/>
    </location>
</feature>
<feature type="cross-link" description="Lanthionine (Ser-Cys); by FlvM2" evidence="5">
    <location>
        <begin position="47"/>
        <end position="53"/>
    </location>
</feature>
<feature type="cross-link" description="Beta-methyllanthionine (Thr-Cys); by FlvM2" evidence="5">
    <location>
        <begin position="55"/>
        <end position="58"/>
    </location>
</feature>
<feature type="cross-link" description="Beta-methyllanthionine (Thr-Cys); by FlvM2" evidence="5">
    <location>
        <begin position="59"/>
        <end position="62"/>
    </location>
</feature>
<organism>
    <name type="scientific">Ruminococcus flavefaciens</name>
    <dbReference type="NCBI Taxonomy" id="1265"/>
    <lineage>
        <taxon>Bacteria</taxon>
        <taxon>Bacillati</taxon>
        <taxon>Bacillota</taxon>
        <taxon>Clostridia</taxon>
        <taxon>Eubacteriales</taxon>
        <taxon>Oscillospiraceae</taxon>
        <taxon>Ruminococcus</taxon>
    </lineage>
</organism>
<gene>
    <name evidence="3" type="primary">FlvA2.d</name>
</gene>
<accession>P0DQL6</accession>
<comment type="function">
    <text evidence="1 2">Lanthionine-containing peptide that does probably not show antibacterial activity, since its analog [+2]Flvbeta.d does not show antibacterial activity against M.luteus (PubMed:27028884). Also does not show antibiotic activity when tested with [Del2]Flvalpha.a, an analog of Flvalpha.a, which is encoded by the same operon than Flvbeta.d (PubMed:27028884). The bactericidal activity of lantibiotics is based on depolarization of energized bacterial cytoplasmic membranes, initiated by the formation of aqueous transmembrane pores (By similarity).</text>
</comment>
<comment type="subcellular location">
    <subcellularLocation>
        <location evidence="4">Secreted</location>
    </subcellularLocation>
</comment>
<comment type="PTM">
    <text evidence="2">Contains LL-lanthionine, DL-lanthionine, and DL-beta-methyllanthionine, when coepressed in E.coli with the flavecin synthetase FlvM2.</text>
</comment>
<name>LAN2D_RUMFL</name>
<dbReference type="GO" id="GO:0005576">
    <property type="term" value="C:extracellular region"/>
    <property type="evidence" value="ECO:0007669"/>
    <property type="project" value="UniProtKB-SubCell"/>
</dbReference>
<dbReference type="NCBIfam" id="NF038161">
    <property type="entry name" value="lant_II_LchA2"/>
    <property type="match status" value="1"/>
</dbReference>
<evidence type="ECO:0000250" key="1">
    <source>
        <dbReference type="UniProtKB" id="P86475"/>
    </source>
</evidence>
<evidence type="ECO:0000269" key="2">
    <source>
    </source>
</evidence>
<evidence type="ECO:0000303" key="3">
    <source>
    </source>
</evidence>
<evidence type="ECO:0000305" key="4"/>
<evidence type="ECO:0000305" key="5">
    <source>
    </source>
</evidence>
<reference key="1">
    <citation type="journal article" date="2016" name="Cell Chem. Biol.">
        <title>Structural characterization and bioactivity analysis of the two-component lantibiotic Flv system from a ruminant bacterium.</title>
        <authorList>
            <person name="Zhao X."/>
            <person name="van der Donk W.A."/>
        </authorList>
    </citation>
    <scope>NUCLEOTIDE SEQUENCE [GENOMIC DNA]</scope>
    <scope>EXPRESSION IN E.COLI</scope>
    <scope>DEHYDRATION AT THR-34 AND THR-41</scope>
    <scope>LANTHIONINE AND METHYLLANTHIONINE CROSS-LINKS</scope>
    <source>
        <strain>FD-1</strain>
    </source>
</reference>